<proteinExistence type="evidence at protein level"/>
<reference key="1">
    <citation type="journal article" date="2001" name="J. Allergy Clin. Immunol.">
        <title>Occupational allergy to bumblebees: allergens of Bombus terrestris.</title>
        <authorList>
            <person name="Hoffman D.R."/>
            <person name="El-Choufani S.E."/>
            <person name="Smith M.M."/>
            <person name="de Groot H."/>
        </authorList>
    </citation>
    <scope>PROTEIN SEQUENCE</scope>
    <scope>SUBCELLULAR LOCATION</scope>
    <scope>TISSUE SPECIFICITY</scope>
    <scope>ALLERGEN</scope>
    <source>
        <tissue>Venom</tissue>
    </source>
</reference>
<organism>
    <name type="scientific">Bombus terrestris</name>
    <name type="common">Buff-tailed bumblebee</name>
    <name type="synonym">Apis terrestris</name>
    <dbReference type="NCBI Taxonomy" id="30195"/>
    <lineage>
        <taxon>Eukaryota</taxon>
        <taxon>Metazoa</taxon>
        <taxon>Ecdysozoa</taxon>
        <taxon>Arthropoda</taxon>
        <taxon>Hexapoda</taxon>
        <taxon>Insecta</taxon>
        <taxon>Pterygota</taxon>
        <taxon>Neoptera</taxon>
        <taxon>Endopterygota</taxon>
        <taxon>Hymenoptera</taxon>
        <taxon>Apocrita</taxon>
        <taxon>Aculeata</taxon>
        <taxon>Apoidea</taxon>
        <taxon>Anthophila</taxon>
        <taxon>Apidae</taxon>
        <taxon>Bombus</taxon>
        <taxon>Bombus</taxon>
    </lineage>
</organism>
<protein>
    <recommendedName>
        <fullName>Venom protease</fullName>
        <ecNumber>3.4.21.-</ecNumber>
    </recommendedName>
    <allergenName>Bom t 4</allergenName>
</protein>
<keyword id="KW-0020">Allergen</keyword>
<keyword id="KW-0903">Direct protein sequencing</keyword>
<keyword id="KW-1015">Disulfide bond</keyword>
<keyword id="KW-0325">Glycoprotein</keyword>
<keyword id="KW-0378">Hydrolase</keyword>
<keyword id="KW-0645">Protease</keyword>
<keyword id="KW-0964">Secreted</keyword>
<keyword id="KW-0720">Serine protease</keyword>
<comment type="subcellular location">
    <subcellularLocation>
        <location evidence="2">Secreted</location>
    </subcellularLocation>
</comment>
<comment type="tissue specificity">
    <text evidence="2">Expressed by the venom duct.</text>
</comment>
<comment type="PTM">
    <text evidence="1">Contains 3 disulfide bonds.</text>
</comment>
<comment type="PTM">
    <text evidence="1">N-glycosylated.</text>
</comment>
<comment type="allergen">
    <text evidence="2">Causes an allergic reaction in human.</text>
</comment>
<comment type="similarity">
    <text evidence="3">Belongs to the peptidase S1 family.</text>
</comment>
<feature type="chain" id="PRO_0000401925" description="Venom protease">
    <location>
        <begin position="1"/>
        <end position="20" status="greater than"/>
    </location>
</feature>
<feature type="non-terminal residue">
    <location>
        <position position="20"/>
    </location>
</feature>
<name>SP4_BOMTE</name>
<accession>P0CH88</accession>
<dbReference type="EC" id="3.4.21.-"/>
<dbReference type="Allergome" id="156">
    <property type="allergen name" value="Bom t 4"/>
</dbReference>
<dbReference type="Allergome" id="3160">
    <property type="allergen name" value="Bom t 4.0101"/>
</dbReference>
<dbReference type="Proteomes" id="UP000835206">
    <property type="component" value="Unplaced"/>
</dbReference>
<dbReference type="GO" id="GO:0005576">
    <property type="term" value="C:extracellular region"/>
    <property type="evidence" value="ECO:0007669"/>
    <property type="project" value="UniProtKB-SubCell"/>
</dbReference>
<dbReference type="GO" id="GO:0008236">
    <property type="term" value="F:serine-type peptidase activity"/>
    <property type="evidence" value="ECO:0007669"/>
    <property type="project" value="UniProtKB-KW"/>
</dbReference>
<dbReference type="GO" id="GO:0006508">
    <property type="term" value="P:proteolysis"/>
    <property type="evidence" value="ECO:0007669"/>
    <property type="project" value="UniProtKB-KW"/>
</dbReference>
<dbReference type="Gene3D" id="2.40.10.10">
    <property type="entry name" value="Trypsin-like serine proteases"/>
    <property type="match status" value="1"/>
</dbReference>
<dbReference type="InterPro" id="IPR009003">
    <property type="entry name" value="Peptidase_S1_PA"/>
</dbReference>
<dbReference type="InterPro" id="IPR043504">
    <property type="entry name" value="Peptidase_S1_PA_chymotrypsin"/>
</dbReference>
<dbReference type="SUPFAM" id="SSF50494">
    <property type="entry name" value="Trypsin-like serine proteases"/>
    <property type="match status" value="1"/>
</dbReference>
<sequence length="20" mass="2085">VVGGKPAKLGAWPWMVALGF</sequence>
<evidence type="ECO:0000250" key="1"/>
<evidence type="ECO:0000269" key="2">
    <source>
    </source>
</evidence>
<evidence type="ECO:0000305" key="3"/>